<reference key="1">
    <citation type="journal article" date="1987" name="J. Biol. Chem.">
        <title>Cloning and characterization of a 12-gene cluster from Bacillus subtilis encoding nine enzymes for de novo purine nucleotide synthesis.</title>
        <authorList>
            <person name="Ebbole D.J."/>
            <person name="Zalkin H."/>
        </authorList>
    </citation>
    <scope>NUCLEOTIDE SEQUENCE [GENOMIC DNA]</scope>
</reference>
<reference key="2">
    <citation type="journal article" date="1996" name="Microbiology">
        <title>The 52 degrees-55 degrees segment of the Bacillus subtilis chromosome: a region devoted to purine uptake and metabolism, and containing the genes cotA, gabP and guaA and the pur gene cluster within a 34960 bp nucleotide sequence.</title>
        <authorList>
            <person name="Borriss R."/>
            <person name="Porwollik S."/>
            <person name="Schroeter R."/>
        </authorList>
    </citation>
    <scope>NUCLEOTIDE SEQUENCE [GENOMIC DNA]</scope>
    <source>
        <strain>168</strain>
    </source>
</reference>
<reference key="3">
    <citation type="journal article" date="1997" name="Nature">
        <title>The complete genome sequence of the Gram-positive bacterium Bacillus subtilis.</title>
        <authorList>
            <person name="Kunst F."/>
            <person name="Ogasawara N."/>
            <person name="Moszer I."/>
            <person name="Albertini A.M."/>
            <person name="Alloni G."/>
            <person name="Azevedo V."/>
            <person name="Bertero M.G."/>
            <person name="Bessieres P."/>
            <person name="Bolotin A."/>
            <person name="Borchert S."/>
            <person name="Borriss R."/>
            <person name="Boursier L."/>
            <person name="Brans A."/>
            <person name="Braun M."/>
            <person name="Brignell S.C."/>
            <person name="Bron S."/>
            <person name="Brouillet S."/>
            <person name="Bruschi C.V."/>
            <person name="Caldwell B."/>
            <person name="Capuano V."/>
            <person name="Carter N.M."/>
            <person name="Choi S.-K."/>
            <person name="Codani J.-J."/>
            <person name="Connerton I.F."/>
            <person name="Cummings N.J."/>
            <person name="Daniel R.A."/>
            <person name="Denizot F."/>
            <person name="Devine K.M."/>
            <person name="Duesterhoeft A."/>
            <person name="Ehrlich S.D."/>
            <person name="Emmerson P.T."/>
            <person name="Entian K.-D."/>
            <person name="Errington J."/>
            <person name="Fabret C."/>
            <person name="Ferrari E."/>
            <person name="Foulger D."/>
            <person name="Fritz C."/>
            <person name="Fujita M."/>
            <person name="Fujita Y."/>
            <person name="Fuma S."/>
            <person name="Galizzi A."/>
            <person name="Galleron N."/>
            <person name="Ghim S.-Y."/>
            <person name="Glaser P."/>
            <person name="Goffeau A."/>
            <person name="Golightly E.J."/>
            <person name="Grandi G."/>
            <person name="Guiseppi G."/>
            <person name="Guy B.J."/>
            <person name="Haga K."/>
            <person name="Haiech J."/>
            <person name="Harwood C.R."/>
            <person name="Henaut A."/>
            <person name="Hilbert H."/>
            <person name="Holsappel S."/>
            <person name="Hosono S."/>
            <person name="Hullo M.-F."/>
            <person name="Itaya M."/>
            <person name="Jones L.-M."/>
            <person name="Joris B."/>
            <person name="Karamata D."/>
            <person name="Kasahara Y."/>
            <person name="Klaerr-Blanchard M."/>
            <person name="Klein C."/>
            <person name="Kobayashi Y."/>
            <person name="Koetter P."/>
            <person name="Koningstein G."/>
            <person name="Krogh S."/>
            <person name="Kumano M."/>
            <person name="Kurita K."/>
            <person name="Lapidus A."/>
            <person name="Lardinois S."/>
            <person name="Lauber J."/>
            <person name="Lazarevic V."/>
            <person name="Lee S.-M."/>
            <person name="Levine A."/>
            <person name="Liu H."/>
            <person name="Masuda S."/>
            <person name="Mauel C."/>
            <person name="Medigue C."/>
            <person name="Medina N."/>
            <person name="Mellado R.P."/>
            <person name="Mizuno M."/>
            <person name="Moestl D."/>
            <person name="Nakai S."/>
            <person name="Noback M."/>
            <person name="Noone D."/>
            <person name="O'Reilly M."/>
            <person name="Ogawa K."/>
            <person name="Ogiwara A."/>
            <person name="Oudega B."/>
            <person name="Park S.-H."/>
            <person name="Parro V."/>
            <person name="Pohl T.M."/>
            <person name="Portetelle D."/>
            <person name="Porwollik S."/>
            <person name="Prescott A.M."/>
            <person name="Presecan E."/>
            <person name="Pujic P."/>
            <person name="Purnelle B."/>
            <person name="Rapoport G."/>
            <person name="Rey M."/>
            <person name="Reynolds S."/>
            <person name="Rieger M."/>
            <person name="Rivolta C."/>
            <person name="Rocha E."/>
            <person name="Roche B."/>
            <person name="Rose M."/>
            <person name="Sadaie Y."/>
            <person name="Sato T."/>
            <person name="Scanlan E."/>
            <person name="Schleich S."/>
            <person name="Schroeter R."/>
            <person name="Scoffone F."/>
            <person name="Sekiguchi J."/>
            <person name="Sekowska A."/>
            <person name="Seror S.J."/>
            <person name="Serror P."/>
            <person name="Shin B.-S."/>
            <person name="Soldo B."/>
            <person name="Sorokin A."/>
            <person name="Tacconi E."/>
            <person name="Takagi T."/>
            <person name="Takahashi H."/>
            <person name="Takemaru K."/>
            <person name="Takeuchi M."/>
            <person name="Tamakoshi A."/>
            <person name="Tanaka T."/>
            <person name="Terpstra P."/>
            <person name="Tognoni A."/>
            <person name="Tosato V."/>
            <person name="Uchiyama S."/>
            <person name="Vandenbol M."/>
            <person name="Vannier F."/>
            <person name="Vassarotti A."/>
            <person name="Viari A."/>
            <person name="Wambutt R."/>
            <person name="Wedler E."/>
            <person name="Wedler H."/>
            <person name="Weitzenegger T."/>
            <person name="Winters P."/>
            <person name="Wipat A."/>
            <person name="Yamamoto H."/>
            <person name="Yamane K."/>
            <person name="Yasumoto K."/>
            <person name="Yata K."/>
            <person name="Yoshida K."/>
            <person name="Yoshikawa H.-F."/>
            <person name="Zumstein E."/>
            <person name="Yoshikawa H."/>
            <person name="Danchin A."/>
        </authorList>
    </citation>
    <scope>NUCLEOTIDE SEQUENCE [LARGE SCALE GENOMIC DNA]</scope>
    <source>
        <strain>168</strain>
    </source>
</reference>
<evidence type="ECO:0000250" key="1"/>
<evidence type="ECO:0000255" key="2">
    <source>
        <dbReference type="HAMAP-Rule" id="MF_00138"/>
    </source>
</evidence>
<evidence type="ECO:0007829" key="3">
    <source>
        <dbReference type="PDB" id="2XCL"/>
    </source>
</evidence>
<evidence type="ECO:0007829" key="4">
    <source>
        <dbReference type="PDB" id="2XD4"/>
    </source>
</evidence>
<comment type="catalytic activity">
    <reaction evidence="2">
        <text>5-phospho-beta-D-ribosylamine + glycine + ATP = N(1)-(5-phospho-beta-D-ribosyl)glycinamide + ADP + phosphate + H(+)</text>
        <dbReference type="Rhea" id="RHEA:17453"/>
        <dbReference type="ChEBI" id="CHEBI:15378"/>
        <dbReference type="ChEBI" id="CHEBI:30616"/>
        <dbReference type="ChEBI" id="CHEBI:43474"/>
        <dbReference type="ChEBI" id="CHEBI:57305"/>
        <dbReference type="ChEBI" id="CHEBI:58681"/>
        <dbReference type="ChEBI" id="CHEBI:143788"/>
        <dbReference type="ChEBI" id="CHEBI:456216"/>
        <dbReference type="EC" id="6.3.4.13"/>
    </reaction>
</comment>
<comment type="cofactor">
    <cofactor evidence="1">
        <name>Mg(2+)</name>
        <dbReference type="ChEBI" id="CHEBI:18420"/>
    </cofactor>
    <cofactor evidence="1">
        <name>Mn(2+)</name>
        <dbReference type="ChEBI" id="CHEBI:29035"/>
    </cofactor>
    <text evidence="1">Binds 1 Mg(2+) or Mn(2+) ion per subunit.</text>
</comment>
<comment type="pathway">
    <text evidence="2">Purine metabolism; IMP biosynthesis via de novo pathway; N(1)-(5-phospho-D-ribosyl)glycinamide from 5-phospho-alpha-D-ribose 1-diphosphate: step 2/2.</text>
</comment>
<comment type="similarity">
    <text evidence="2">Belongs to the GARS family.</text>
</comment>
<sequence>MNVLIIGKGGREHTLAWKAAQSSLVENVFAAPGNDGMAASAQLVNIEESDHAGLVSFAKQNQVGLTIVGPEVPLIEGLVDEFEKAGLHVFGPSKAAAIIEGSKQFAKDLMKKYDIPTAEYETFTSFDEAKAYVQEKGAPIVIKADGLAAGKGVTVAMTEEEAIACLHDFLEDEKFGDASASVVIEEYLSGEEFSLMAFVKGEKVYPMVIAQDHKRAFDGDKGPNTGGMGAYSPVPQISEETVRHAVETIVKPAAKAMVQEGRSFTGVLYAGLMLTENGSKVIEFNARFGDPETQVVLPRMESDLVQVLLDLLDDKEVDLRWKDTAAVSVVLASEGYPESYAKGTPIGSLAAETEQVVVFHAGTKAEGGEFVTNGGRVANVTAFDETFEAARDRVYKAVDEIFKPGLFFRKDIGARALKAAQK</sequence>
<dbReference type="EC" id="6.3.4.13" evidence="2"/>
<dbReference type="EMBL" id="J02732">
    <property type="protein sequence ID" value="AAA22684.1"/>
    <property type="molecule type" value="Genomic_DNA"/>
</dbReference>
<dbReference type="EMBL" id="AF011544">
    <property type="protein sequence ID" value="AAB72186.1"/>
    <property type="molecule type" value="Genomic_DNA"/>
</dbReference>
<dbReference type="EMBL" id="AL009126">
    <property type="protein sequence ID" value="CAB12473.1"/>
    <property type="molecule type" value="Genomic_DNA"/>
</dbReference>
<dbReference type="PIR" id="B29183">
    <property type="entry name" value="AJBSAG"/>
</dbReference>
<dbReference type="RefSeq" id="NP_388535.1">
    <property type="nucleotide sequence ID" value="NC_000964.3"/>
</dbReference>
<dbReference type="RefSeq" id="WP_003242993.1">
    <property type="nucleotide sequence ID" value="NZ_OZ025638.1"/>
</dbReference>
<dbReference type="PDB" id="2XCL">
    <property type="method" value="X-ray"/>
    <property type="resolution" value="2.10 A"/>
    <property type="chains" value="A=1-422"/>
</dbReference>
<dbReference type="PDB" id="2XD4">
    <property type="method" value="X-ray"/>
    <property type="resolution" value="2.65 A"/>
    <property type="chains" value="A=1-422"/>
</dbReference>
<dbReference type="PDBsum" id="2XCL"/>
<dbReference type="PDBsum" id="2XD4"/>
<dbReference type="SMR" id="P12039"/>
<dbReference type="FunCoup" id="P12039">
    <property type="interactions" value="603"/>
</dbReference>
<dbReference type="STRING" id="224308.BSU06530"/>
<dbReference type="PaxDb" id="224308-BSU06530"/>
<dbReference type="EnsemblBacteria" id="CAB12473">
    <property type="protein sequence ID" value="CAB12473"/>
    <property type="gene ID" value="BSU_06530"/>
</dbReference>
<dbReference type="GeneID" id="938741"/>
<dbReference type="KEGG" id="bsu:BSU06530"/>
<dbReference type="PATRIC" id="fig|224308.179.peg.709"/>
<dbReference type="eggNOG" id="COG0151">
    <property type="taxonomic scope" value="Bacteria"/>
</dbReference>
<dbReference type="InParanoid" id="P12039"/>
<dbReference type="OrthoDB" id="9807240at2"/>
<dbReference type="PhylomeDB" id="P12039"/>
<dbReference type="BioCyc" id="BSUB:BSU06530-MONOMER"/>
<dbReference type="UniPathway" id="UPA00074">
    <property type="reaction ID" value="UER00125"/>
</dbReference>
<dbReference type="EvolutionaryTrace" id="P12039"/>
<dbReference type="Proteomes" id="UP000001570">
    <property type="component" value="Chromosome"/>
</dbReference>
<dbReference type="GO" id="GO:0005524">
    <property type="term" value="F:ATP binding"/>
    <property type="evidence" value="ECO:0007669"/>
    <property type="project" value="UniProtKB-KW"/>
</dbReference>
<dbReference type="GO" id="GO:0046872">
    <property type="term" value="F:metal ion binding"/>
    <property type="evidence" value="ECO:0007669"/>
    <property type="project" value="UniProtKB-KW"/>
</dbReference>
<dbReference type="GO" id="GO:0004637">
    <property type="term" value="F:phosphoribosylamine-glycine ligase activity"/>
    <property type="evidence" value="ECO:0007669"/>
    <property type="project" value="UniProtKB-UniRule"/>
</dbReference>
<dbReference type="GO" id="GO:0006189">
    <property type="term" value="P:'de novo' IMP biosynthetic process"/>
    <property type="evidence" value="ECO:0007669"/>
    <property type="project" value="UniProtKB-UniRule"/>
</dbReference>
<dbReference type="GO" id="GO:0009113">
    <property type="term" value="P:purine nucleobase biosynthetic process"/>
    <property type="evidence" value="ECO:0007669"/>
    <property type="project" value="InterPro"/>
</dbReference>
<dbReference type="FunFam" id="3.40.50.20:FF:000006">
    <property type="entry name" value="Phosphoribosylamine--glycine ligase, chloroplastic"/>
    <property type="match status" value="1"/>
</dbReference>
<dbReference type="FunFam" id="3.30.1490.20:FF:000006">
    <property type="entry name" value="phosphoribosylamine--glycine ligase, chloroplastic-like"/>
    <property type="match status" value="1"/>
</dbReference>
<dbReference type="FunFam" id="3.30.470.20:FF:000018">
    <property type="entry name" value="Trifunctional purine biosynthetic protein adenosine-3"/>
    <property type="match status" value="1"/>
</dbReference>
<dbReference type="FunFam" id="3.90.600.10:FF:000001">
    <property type="entry name" value="Trifunctional purine biosynthetic protein adenosine-3"/>
    <property type="match status" value="1"/>
</dbReference>
<dbReference type="Gene3D" id="3.40.50.20">
    <property type="match status" value="1"/>
</dbReference>
<dbReference type="Gene3D" id="3.30.1490.20">
    <property type="entry name" value="ATP-grasp fold, A domain"/>
    <property type="match status" value="1"/>
</dbReference>
<dbReference type="Gene3D" id="3.30.470.20">
    <property type="entry name" value="ATP-grasp fold, B domain"/>
    <property type="match status" value="1"/>
</dbReference>
<dbReference type="Gene3D" id="3.90.600.10">
    <property type="entry name" value="Phosphoribosylglycinamide synthetase, C-terminal domain"/>
    <property type="match status" value="1"/>
</dbReference>
<dbReference type="HAMAP" id="MF_00138">
    <property type="entry name" value="GARS"/>
    <property type="match status" value="1"/>
</dbReference>
<dbReference type="InterPro" id="IPR011761">
    <property type="entry name" value="ATP-grasp"/>
</dbReference>
<dbReference type="InterPro" id="IPR013815">
    <property type="entry name" value="ATP_grasp_subdomain_1"/>
</dbReference>
<dbReference type="InterPro" id="IPR016185">
    <property type="entry name" value="PreATP-grasp_dom_sf"/>
</dbReference>
<dbReference type="InterPro" id="IPR020561">
    <property type="entry name" value="PRibGlycinamid_synth_ATP-grasp"/>
</dbReference>
<dbReference type="InterPro" id="IPR000115">
    <property type="entry name" value="PRibGlycinamide_synth"/>
</dbReference>
<dbReference type="InterPro" id="IPR020560">
    <property type="entry name" value="PRibGlycinamide_synth_C-dom"/>
</dbReference>
<dbReference type="InterPro" id="IPR037123">
    <property type="entry name" value="PRibGlycinamide_synth_C_sf"/>
</dbReference>
<dbReference type="InterPro" id="IPR020559">
    <property type="entry name" value="PRibGlycinamide_synth_CS"/>
</dbReference>
<dbReference type="InterPro" id="IPR020562">
    <property type="entry name" value="PRibGlycinamide_synth_N"/>
</dbReference>
<dbReference type="InterPro" id="IPR011054">
    <property type="entry name" value="Rudment_hybrid_motif"/>
</dbReference>
<dbReference type="NCBIfam" id="TIGR00877">
    <property type="entry name" value="purD"/>
    <property type="match status" value="1"/>
</dbReference>
<dbReference type="PANTHER" id="PTHR43472">
    <property type="entry name" value="PHOSPHORIBOSYLAMINE--GLYCINE LIGASE"/>
    <property type="match status" value="1"/>
</dbReference>
<dbReference type="PANTHER" id="PTHR43472:SF1">
    <property type="entry name" value="PHOSPHORIBOSYLAMINE--GLYCINE LIGASE, CHLOROPLASTIC"/>
    <property type="match status" value="1"/>
</dbReference>
<dbReference type="Pfam" id="PF01071">
    <property type="entry name" value="GARS_A"/>
    <property type="match status" value="1"/>
</dbReference>
<dbReference type="Pfam" id="PF02843">
    <property type="entry name" value="GARS_C"/>
    <property type="match status" value="1"/>
</dbReference>
<dbReference type="Pfam" id="PF02844">
    <property type="entry name" value="GARS_N"/>
    <property type="match status" value="1"/>
</dbReference>
<dbReference type="SMART" id="SM01209">
    <property type="entry name" value="GARS_A"/>
    <property type="match status" value="1"/>
</dbReference>
<dbReference type="SMART" id="SM01210">
    <property type="entry name" value="GARS_C"/>
    <property type="match status" value="1"/>
</dbReference>
<dbReference type="SUPFAM" id="SSF56059">
    <property type="entry name" value="Glutathione synthetase ATP-binding domain-like"/>
    <property type="match status" value="1"/>
</dbReference>
<dbReference type="SUPFAM" id="SSF52440">
    <property type="entry name" value="PreATP-grasp domain"/>
    <property type="match status" value="1"/>
</dbReference>
<dbReference type="SUPFAM" id="SSF51246">
    <property type="entry name" value="Rudiment single hybrid motif"/>
    <property type="match status" value="1"/>
</dbReference>
<dbReference type="PROSITE" id="PS50975">
    <property type="entry name" value="ATP_GRASP"/>
    <property type="match status" value="1"/>
</dbReference>
<dbReference type="PROSITE" id="PS00184">
    <property type="entry name" value="GARS"/>
    <property type="match status" value="1"/>
</dbReference>
<feature type="chain" id="PRO_0000151436" description="Phosphoribosylamine--glycine ligase">
    <location>
        <begin position="1"/>
        <end position="422"/>
    </location>
</feature>
<feature type="domain" description="ATP-grasp" evidence="2">
    <location>
        <begin position="107"/>
        <end position="313"/>
    </location>
</feature>
<feature type="binding site" evidence="2">
    <location>
        <begin position="133"/>
        <end position="194"/>
    </location>
    <ligand>
        <name>ATP</name>
        <dbReference type="ChEBI" id="CHEBI:30616"/>
    </ligand>
</feature>
<feature type="binding site" evidence="2">
    <location>
        <position position="283"/>
    </location>
    <ligand>
        <name>Mg(2+)</name>
        <dbReference type="ChEBI" id="CHEBI:18420"/>
    </ligand>
</feature>
<feature type="binding site" evidence="2">
    <location>
        <position position="285"/>
    </location>
    <ligand>
        <name>Mg(2+)</name>
        <dbReference type="ChEBI" id="CHEBI:18420"/>
    </ligand>
</feature>
<feature type="strand" evidence="3">
    <location>
        <begin position="2"/>
        <end position="7"/>
    </location>
</feature>
<feature type="helix" evidence="3">
    <location>
        <begin position="10"/>
        <end position="19"/>
    </location>
</feature>
<feature type="strand" evidence="3">
    <location>
        <begin position="26"/>
        <end position="32"/>
    </location>
</feature>
<feature type="helix" evidence="3">
    <location>
        <begin position="35"/>
        <end position="37"/>
    </location>
</feature>
<feature type="turn" evidence="3">
    <location>
        <begin position="38"/>
        <end position="40"/>
    </location>
</feature>
<feature type="helix" evidence="3">
    <location>
        <begin position="51"/>
        <end position="60"/>
    </location>
</feature>
<feature type="strand" evidence="3">
    <location>
        <begin position="63"/>
        <end position="68"/>
    </location>
</feature>
<feature type="helix" evidence="3">
    <location>
        <begin position="71"/>
        <end position="75"/>
    </location>
</feature>
<feature type="helix" evidence="3">
    <location>
        <begin position="78"/>
        <end position="84"/>
    </location>
</feature>
<feature type="strand" evidence="3">
    <location>
        <begin position="89"/>
        <end position="91"/>
    </location>
</feature>
<feature type="turn" evidence="3">
    <location>
        <begin position="94"/>
        <end position="97"/>
    </location>
</feature>
<feature type="helix" evidence="3">
    <location>
        <begin position="98"/>
        <end position="101"/>
    </location>
</feature>
<feature type="helix" evidence="3">
    <location>
        <begin position="103"/>
        <end position="112"/>
    </location>
</feature>
<feature type="strand" evidence="3">
    <location>
        <begin position="120"/>
        <end position="124"/>
    </location>
</feature>
<feature type="helix" evidence="3">
    <location>
        <begin position="126"/>
        <end position="136"/>
    </location>
</feature>
<feature type="strand" evidence="3">
    <location>
        <begin position="138"/>
        <end position="146"/>
    </location>
</feature>
<feature type="helix" evidence="3">
    <location>
        <begin position="148"/>
        <end position="150"/>
    </location>
</feature>
<feature type="strand" evidence="3">
    <location>
        <begin position="153"/>
        <end position="158"/>
    </location>
</feature>
<feature type="helix" evidence="3">
    <location>
        <begin position="159"/>
        <end position="170"/>
    </location>
</feature>
<feature type="helix" evidence="3">
    <location>
        <begin position="176"/>
        <end position="179"/>
    </location>
</feature>
<feature type="strand" evidence="3">
    <location>
        <begin position="180"/>
        <end position="186"/>
    </location>
</feature>
<feature type="strand" evidence="3">
    <location>
        <begin position="190"/>
        <end position="200"/>
    </location>
</feature>
<feature type="strand" evidence="3">
    <location>
        <begin position="203"/>
        <end position="206"/>
    </location>
</feature>
<feature type="strand" evidence="3">
    <location>
        <begin position="210"/>
        <end position="217"/>
    </location>
</feature>
<feature type="helix" evidence="3">
    <location>
        <begin position="218"/>
        <end position="220"/>
    </location>
</feature>
<feature type="strand" evidence="3">
    <location>
        <begin position="221"/>
        <end position="233"/>
    </location>
</feature>
<feature type="helix" evidence="3">
    <location>
        <begin position="239"/>
        <end position="248"/>
    </location>
</feature>
<feature type="helix" evidence="3">
    <location>
        <begin position="250"/>
        <end position="259"/>
    </location>
</feature>
<feature type="strand" evidence="3">
    <location>
        <begin position="265"/>
        <end position="275"/>
    </location>
</feature>
<feature type="strand" evidence="3">
    <location>
        <begin position="278"/>
        <end position="287"/>
    </location>
</feature>
<feature type="turn" evidence="3">
    <location>
        <begin position="290"/>
        <end position="292"/>
    </location>
</feature>
<feature type="helix" evidence="3">
    <location>
        <begin position="293"/>
        <end position="296"/>
    </location>
</feature>
<feature type="helix" evidence="3">
    <location>
        <begin position="297"/>
        <end position="299"/>
    </location>
</feature>
<feature type="helix" evidence="3">
    <location>
        <begin position="304"/>
        <end position="312"/>
    </location>
</feature>
<feature type="strand" evidence="3">
    <location>
        <begin position="325"/>
        <end position="333"/>
    </location>
</feature>
<feature type="turn" evidence="3">
    <location>
        <begin position="334"/>
        <end position="337"/>
    </location>
</feature>
<feature type="strand" evidence="4">
    <location>
        <begin position="345"/>
        <end position="347"/>
    </location>
</feature>
<feature type="strand" evidence="3">
    <location>
        <begin position="353"/>
        <end position="365"/>
    </location>
</feature>
<feature type="strand" evidence="3">
    <location>
        <begin position="367"/>
        <end position="372"/>
    </location>
</feature>
<feature type="strand" evidence="3">
    <location>
        <begin position="374"/>
        <end position="386"/>
    </location>
</feature>
<feature type="helix" evidence="3">
    <location>
        <begin position="387"/>
        <end position="401"/>
    </location>
</feature>
<feature type="helix" evidence="3">
    <location>
        <begin position="414"/>
        <end position="420"/>
    </location>
</feature>
<organism>
    <name type="scientific">Bacillus subtilis (strain 168)</name>
    <dbReference type="NCBI Taxonomy" id="224308"/>
    <lineage>
        <taxon>Bacteria</taxon>
        <taxon>Bacillati</taxon>
        <taxon>Bacillota</taxon>
        <taxon>Bacilli</taxon>
        <taxon>Bacillales</taxon>
        <taxon>Bacillaceae</taxon>
        <taxon>Bacillus</taxon>
    </lineage>
</organism>
<keyword id="KW-0002">3D-structure</keyword>
<keyword id="KW-0067">ATP-binding</keyword>
<keyword id="KW-0436">Ligase</keyword>
<keyword id="KW-0460">Magnesium</keyword>
<keyword id="KW-0464">Manganese</keyword>
<keyword id="KW-0479">Metal-binding</keyword>
<keyword id="KW-0547">Nucleotide-binding</keyword>
<keyword id="KW-0658">Purine biosynthesis</keyword>
<keyword id="KW-1185">Reference proteome</keyword>
<proteinExistence type="evidence at protein level"/>
<gene>
    <name evidence="2" type="primary">purD</name>
    <name type="ordered locus">BSU06530</name>
</gene>
<accession>P12039</accession>
<protein>
    <recommendedName>
        <fullName evidence="2">Phosphoribosylamine--glycine ligase</fullName>
        <ecNumber evidence="2">6.3.4.13</ecNumber>
    </recommendedName>
    <alternativeName>
        <fullName evidence="2">GARS</fullName>
    </alternativeName>
    <alternativeName>
        <fullName evidence="2">Glycinamide ribonucleotide synthetase</fullName>
    </alternativeName>
    <alternativeName>
        <fullName evidence="2">Phosphoribosylglycinamide synthetase</fullName>
    </alternativeName>
</protein>
<name>PUR2_BACSU</name>